<reference key="1">
    <citation type="submission" date="1996-02" db="EMBL/GenBank/DDBJ databases">
        <authorList>
            <person name="Poehling S."/>
            <person name="Piepersberg W."/>
            <person name="Wehmeier U.F."/>
        </authorList>
    </citation>
    <scope>NUCLEOTIDE SEQUENCE [GENOMIC DNA]</scope>
    <source>
        <strain>ATCC 14077 / CBS 700.72 / DSM 40480 / NBRC 13399 / VKM Ac-160</strain>
    </source>
</reference>
<comment type="function">
    <text evidence="1">Forms part of the ribosomal stalk which helps the ribosome interact with GTP-bound translation factors.</text>
</comment>
<comment type="subunit">
    <text evidence="1">Part of the ribosomal stalk of the 50S ribosomal subunit. Interacts with L10 and the large rRNA to form the base of the stalk. L10 forms an elongated spine to which L12 dimers bind in a sequential fashion forming a multimeric L10(L12)X complex (By similarity).</text>
</comment>
<comment type="PTM">
    <text evidence="1">One or more lysine residues are methylated.</text>
</comment>
<comment type="similarity">
    <text evidence="2">Belongs to the universal ribosomal protein uL11 family.</text>
</comment>
<sequence length="43" mass="4470">MPPKKKKVTGLIKLQIQAGAATTAPPVGPALGQHGVNIMEFCK</sequence>
<gene>
    <name type="primary">rplK</name>
</gene>
<dbReference type="EMBL" id="X95916">
    <property type="protein sequence ID" value="CAA65166.1"/>
    <property type="molecule type" value="Genomic_DNA"/>
</dbReference>
<dbReference type="STRING" id="33898.GCA_000772895_04099"/>
<dbReference type="GO" id="GO:1990904">
    <property type="term" value="C:ribonucleoprotein complex"/>
    <property type="evidence" value="ECO:0007669"/>
    <property type="project" value="UniProtKB-KW"/>
</dbReference>
<dbReference type="GO" id="GO:0005840">
    <property type="term" value="C:ribosome"/>
    <property type="evidence" value="ECO:0007669"/>
    <property type="project" value="UniProtKB-KW"/>
</dbReference>
<dbReference type="GO" id="GO:0019843">
    <property type="term" value="F:rRNA binding"/>
    <property type="evidence" value="ECO:0007669"/>
    <property type="project" value="UniProtKB-KW"/>
</dbReference>
<dbReference type="Gene3D" id="3.30.1550.10">
    <property type="entry name" value="Ribosomal protein L11/L12, N-terminal domain"/>
    <property type="match status" value="1"/>
</dbReference>
<dbReference type="InterPro" id="IPR020784">
    <property type="entry name" value="Ribosomal_uL11_N"/>
</dbReference>
<dbReference type="InterPro" id="IPR036796">
    <property type="entry name" value="Ribosomal_uL11_N_sf"/>
</dbReference>
<dbReference type="Pfam" id="PF03946">
    <property type="entry name" value="Ribosomal_L11_N"/>
    <property type="match status" value="1"/>
</dbReference>
<dbReference type="SUPFAM" id="SSF54747">
    <property type="entry name" value="Ribosomal L11/L12e N-terminal domain"/>
    <property type="match status" value="1"/>
</dbReference>
<feature type="chain" id="PRO_0000104379" description="Large ribosomal subunit protein uL11">
    <location>
        <begin position="1"/>
        <end position="43" status="greater than"/>
    </location>
</feature>
<feature type="non-terminal residue">
    <location>
        <position position="43"/>
    </location>
</feature>
<organism>
    <name type="scientific">Streptomyces galbus</name>
    <dbReference type="NCBI Taxonomy" id="33898"/>
    <lineage>
        <taxon>Bacteria</taxon>
        <taxon>Bacillati</taxon>
        <taxon>Actinomycetota</taxon>
        <taxon>Actinomycetes</taxon>
        <taxon>Kitasatosporales</taxon>
        <taxon>Streptomycetaceae</taxon>
        <taxon>Streptomyces</taxon>
    </lineage>
</organism>
<name>RL11_STRGB</name>
<evidence type="ECO:0000250" key="1"/>
<evidence type="ECO:0000305" key="2"/>
<protein>
    <recommendedName>
        <fullName evidence="2">Large ribosomal subunit protein uL11</fullName>
    </recommendedName>
    <alternativeName>
        <fullName>50S ribosomal protein L11</fullName>
    </alternativeName>
</protein>
<proteinExistence type="inferred from homology"/>
<accession>P52861</accession>
<keyword id="KW-0488">Methylation</keyword>
<keyword id="KW-0687">Ribonucleoprotein</keyword>
<keyword id="KW-0689">Ribosomal protein</keyword>
<keyword id="KW-0694">RNA-binding</keyword>
<keyword id="KW-0699">rRNA-binding</keyword>